<feature type="chain" id="PRO_0000052179" description="Ent-kaurenoic acid oxidase 2">
    <location>
        <begin position="1"/>
        <end position="489"/>
    </location>
</feature>
<feature type="transmembrane region" description="Helical" evidence="2">
    <location>
        <begin position="5"/>
        <end position="25"/>
    </location>
</feature>
<feature type="binding site" description="axial binding residue" evidence="1">
    <location>
        <position position="436"/>
    </location>
    <ligand>
        <name>heme</name>
        <dbReference type="ChEBI" id="CHEBI:30413"/>
    </ligand>
    <ligandPart>
        <name>Fe</name>
        <dbReference type="ChEBI" id="CHEBI:18248"/>
    </ligandPart>
</feature>
<feature type="sequence conflict" description="In Ref. 1; AAK11565." evidence="6" ref="1">
    <original>E</original>
    <variation>K</variation>
    <location>
        <position position="288"/>
    </location>
</feature>
<reference key="1">
    <citation type="journal article" date="2001" name="Proc. Natl. Acad. Sci. U.S.A.">
        <title>The CYP88A cytochrome P450, ent-kaurenoic acid oxidase, catalyzes three steps of the gibberellin biosynthesis pathway.</title>
        <authorList>
            <person name="Helliwell C.A."/>
            <person name="Chandler P.M."/>
            <person name="Poole A."/>
            <person name="Dennis E.S."/>
            <person name="Peacock J.W."/>
        </authorList>
    </citation>
    <scope>NUCLEOTIDE SEQUENCE [MRNA]</scope>
    <scope>FUNCTION</scope>
    <scope>CATALYTIC ACTIVITY</scope>
    <scope>TISSUE SPECIFICITY</scope>
    <scope>PATHWAY</scope>
    <source>
        <strain>cv. Landsberg erecta</strain>
        <tissue>Silique</tissue>
    </source>
</reference>
<reference key="2">
    <citation type="journal article" date="1999" name="Nature">
        <title>Sequence and analysis of chromosome 2 of the plant Arabidopsis thaliana.</title>
        <authorList>
            <person name="Lin X."/>
            <person name="Kaul S."/>
            <person name="Rounsley S.D."/>
            <person name="Shea T.P."/>
            <person name="Benito M.-I."/>
            <person name="Town C.D."/>
            <person name="Fujii C.Y."/>
            <person name="Mason T.M."/>
            <person name="Bowman C.L."/>
            <person name="Barnstead M.E."/>
            <person name="Feldblyum T.V."/>
            <person name="Buell C.R."/>
            <person name="Ketchum K.A."/>
            <person name="Lee J.J."/>
            <person name="Ronning C.M."/>
            <person name="Koo H.L."/>
            <person name="Moffat K.S."/>
            <person name="Cronin L.A."/>
            <person name="Shen M."/>
            <person name="Pai G."/>
            <person name="Van Aken S."/>
            <person name="Umayam L."/>
            <person name="Tallon L.J."/>
            <person name="Gill J.E."/>
            <person name="Adams M.D."/>
            <person name="Carrera A.J."/>
            <person name="Creasy T.H."/>
            <person name="Goodman H.M."/>
            <person name="Somerville C.R."/>
            <person name="Copenhaver G.P."/>
            <person name="Preuss D."/>
            <person name="Nierman W.C."/>
            <person name="White O."/>
            <person name="Eisen J.A."/>
            <person name="Salzberg S.L."/>
            <person name="Fraser C.M."/>
            <person name="Venter J.C."/>
        </authorList>
    </citation>
    <scope>NUCLEOTIDE SEQUENCE [LARGE SCALE GENOMIC DNA]</scope>
    <source>
        <strain>cv. Columbia</strain>
    </source>
</reference>
<reference key="3">
    <citation type="journal article" date="2017" name="Plant J.">
        <title>Araport11: a complete reannotation of the Arabidopsis thaliana reference genome.</title>
        <authorList>
            <person name="Cheng C.Y."/>
            <person name="Krishnakumar V."/>
            <person name="Chan A.P."/>
            <person name="Thibaud-Nissen F."/>
            <person name="Schobel S."/>
            <person name="Town C.D."/>
        </authorList>
    </citation>
    <scope>GENOME REANNOTATION</scope>
    <source>
        <strain>cv. Columbia</strain>
    </source>
</reference>
<reference key="4">
    <citation type="journal article" date="2001" name="Plant J.">
        <title>A plastid envelope location of Arabidopsis ent-kaurene oxidase links the plastid and endoplasmic reticulum steps of the gibberellin biosynthesis pathway.</title>
        <authorList>
            <person name="Helliwell C.A."/>
            <person name="Sullivan J.A."/>
            <person name="Mould R.M."/>
            <person name="Gray J.C."/>
            <person name="Peacock W.J."/>
            <person name="Dennis E.S."/>
        </authorList>
    </citation>
    <scope>SUBCELLULAR LOCATION</scope>
</reference>
<proteinExistence type="evidence at protein level"/>
<protein>
    <recommendedName>
        <fullName evidence="5">Ent-kaurenoic acid oxidase 2</fullName>
        <shortName evidence="5">AtKAO2</shortName>
        <ecNumber evidence="3">1.14.14.107</ecNumber>
    </recommendedName>
    <alternativeName>
        <fullName evidence="5">Cytochrome P450 88A4</fullName>
    </alternativeName>
</protein>
<evidence type="ECO:0000250" key="1">
    <source>
        <dbReference type="UniProtKB" id="P04798"/>
    </source>
</evidence>
<evidence type="ECO:0000255" key="2"/>
<evidence type="ECO:0000269" key="3">
    <source>
    </source>
</evidence>
<evidence type="ECO:0000269" key="4">
    <source>
    </source>
</evidence>
<evidence type="ECO:0000303" key="5">
    <source>
    </source>
</evidence>
<evidence type="ECO:0000305" key="6"/>
<evidence type="ECO:0000312" key="7">
    <source>
        <dbReference type="Araport" id="AT2G32440"/>
    </source>
</evidence>
<evidence type="ECO:0000312" key="8">
    <source>
        <dbReference type="EMBL" id="AAC69934.1"/>
    </source>
</evidence>
<gene>
    <name evidence="5" type="primary">KAO2</name>
    <name evidence="5" type="synonym">CYP88A4</name>
    <name evidence="7" type="ordered locus">At2g32440</name>
    <name evidence="8" type="ORF">T32F6.4</name>
</gene>
<sequence>MTETGLILMWFPLIILGLFVLKWVLKRVNVWIYVSKLGEKKHYLPPGDLGWPVIGNMWSFLRAFKTSDPESFIQSYITRYGRTGIYKAHMFGYPCVLVTTPETCRRVLTDDDAFHIGWPKSTMKLIGRKSFVGISFEEHKRLRRLTSAPVNGPEALSVYIQFIEETVNTDLEKWSKMGEIEFLSHLRKLTFKVIMYIFLSSESEHVMDSLEREYTNLNYGVRAMGINLPGFAYHRALKARKKLVAAFQSIVTNRRNQRKQNISSNRKDMLDNLIDVKDENGRVLDDEEIIDLLLMYLNAGHESSGHLTMWATILMQEHPMILQKAKEEQERIVKKRAPGQKLTLKETREMVYLSQVIDETLRVITFSLTAFREAKSDVQMDGYIIPKGWKVLTWFRNVHLDPEIYPDPKKFDPSRWEGYTPKAGTFLPFGLGSHLCPGNDLAKLEISIFLHHFLLKYRVERSNPGCPVMFLPHNRPKDNCLARITRTMP</sequence>
<name>KAO2_ARATH</name>
<accession>Q9C5Y2</accession>
<accession>Q9ZV72</accession>
<organism>
    <name type="scientific">Arabidopsis thaliana</name>
    <name type="common">Mouse-ear cress</name>
    <dbReference type="NCBI Taxonomy" id="3702"/>
    <lineage>
        <taxon>Eukaryota</taxon>
        <taxon>Viridiplantae</taxon>
        <taxon>Streptophyta</taxon>
        <taxon>Embryophyta</taxon>
        <taxon>Tracheophyta</taxon>
        <taxon>Spermatophyta</taxon>
        <taxon>Magnoliopsida</taxon>
        <taxon>eudicotyledons</taxon>
        <taxon>Gunneridae</taxon>
        <taxon>Pentapetalae</taxon>
        <taxon>rosids</taxon>
        <taxon>malvids</taxon>
        <taxon>Brassicales</taxon>
        <taxon>Brassicaceae</taxon>
        <taxon>Camelineae</taxon>
        <taxon>Arabidopsis</taxon>
    </lineage>
</organism>
<dbReference type="EC" id="1.14.14.107" evidence="3"/>
<dbReference type="EMBL" id="AF318501">
    <property type="protein sequence ID" value="AAK11565.1"/>
    <property type="molecule type" value="mRNA"/>
</dbReference>
<dbReference type="EMBL" id="AC005700">
    <property type="protein sequence ID" value="AAC69934.1"/>
    <property type="molecule type" value="Genomic_DNA"/>
</dbReference>
<dbReference type="EMBL" id="CP002685">
    <property type="protein sequence ID" value="AEC08685.1"/>
    <property type="molecule type" value="Genomic_DNA"/>
</dbReference>
<dbReference type="EMBL" id="CP002685">
    <property type="protein sequence ID" value="AEC08686.1"/>
    <property type="molecule type" value="Genomic_DNA"/>
</dbReference>
<dbReference type="PIR" id="B84733">
    <property type="entry name" value="B84733"/>
</dbReference>
<dbReference type="RefSeq" id="NP_001189657.1">
    <property type="nucleotide sequence ID" value="NM_001202728.1"/>
</dbReference>
<dbReference type="RefSeq" id="NP_180803.1">
    <property type="nucleotide sequence ID" value="NM_128803.4"/>
</dbReference>
<dbReference type="SMR" id="Q9C5Y2"/>
<dbReference type="FunCoup" id="Q9C5Y2">
    <property type="interactions" value="255"/>
</dbReference>
<dbReference type="STRING" id="3702.Q9C5Y2"/>
<dbReference type="PaxDb" id="3702-AT2G32440.2"/>
<dbReference type="ProteomicsDB" id="250612"/>
<dbReference type="EnsemblPlants" id="AT2G32440.1">
    <property type="protein sequence ID" value="AT2G32440.1"/>
    <property type="gene ID" value="AT2G32440"/>
</dbReference>
<dbReference type="EnsemblPlants" id="AT2G32440.2">
    <property type="protein sequence ID" value="AT2G32440.2"/>
    <property type="gene ID" value="AT2G32440"/>
</dbReference>
<dbReference type="GeneID" id="817805"/>
<dbReference type="Gramene" id="AT2G32440.1">
    <property type="protein sequence ID" value="AT2G32440.1"/>
    <property type="gene ID" value="AT2G32440"/>
</dbReference>
<dbReference type="Gramene" id="AT2G32440.2">
    <property type="protein sequence ID" value="AT2G32440.2"/>
    <property type="gene ID" value="AT2G32440"/>
</dbReference>
<dbReference type="KEGG" id="ath:AT2G32440"/>
<dbReference type="Araport" id="AT2G32440"/>
<dbReference type="TAIR" id="AT2G32440">
    <property type="gene designation" value="KAO2"/>
</dbReference>
<dbReference type="eggNOG" id="KOG0157">
    <property type="taxonomic scope" value="Eukaryota"/>
</dbReference>
<dbReference type="HOGENOM" id="CLU_001570_15_5_1"/>
<dbReference type="InParanoid" id="Q9C5Y2"/>
<dbReference type="OMA" id="TMWATIL"/>
<dbReference type="OrthoDB" id="1470350at2759"/>
<dbReference type="PhylomeDB" id="Q9C5Y2"/>
<dbReference type="BioCyc" id="ARA:AT2G32440-MONOMER"/>
<dbReference type="BioCyc" id="MetaCyc:AT2G32440-MONOMER"/>
<dbReference type="BRENDA" id="1.14.13.79">
    <property type="organism ID" value="399"/>
</dbReference>
<dbReference type="BRENDA" id="1.14.14.107">
    <property type="organism ID" value="399"/>
</dbReference>
<dbReference type="UniPathway" id="UPA00390"/>
<dbReference type="PRO" id="PR:Q9C5Y2"/>
<dbReference type="Proteomes" id="UP000006548">
    <property type="component" value="Chromosome 2"/>
</dbReference>
<dbReference type="ExpressionAtlas" id="Q9C5Y2">
    <property type="expression patterns" value="baseline and differential"/>
</dbReference>
<dbReference type="GO" id="GO:0005783">
    <property type="term" value="C:endoplasmic reticulum"/>
    <property type="evidence" value="ECO:0000314"/>
    <property type="project" value="TAIR"/>
</dbReference>
<dbReference type="GO" id="GO:0005789">
    <property type="term" value="C:endoplasmic reticulum membrane"/>
    <property type="evidence" value="ECO:0007669"/>
    <property type="project" value="UniProtKB-SubCell"/>
</dbReference>
<dbReference type="GO" id="GO:0051777">
    <property type="term" value="F:ent-kaurenoic acid monooxygenase activity"/>
    <property type="evidence" value="ECO:0000314"/>
    <property type="project" value="TAIR"/>
</dbReference>
<dbReference type="GO" id="GO:0020037">
    <property type="term" value="F:heme binding"/>
    <property type="evidence" value="ECO:0007669"/>
    <property type="project" value="InterPro"/>
</dbReference>
<dbReference type="GO" id="GO:0005506">
    <property type="term" value="F:iron ion binding"/>
    <property type="evidence" value="ECO:0007669"/>
    <property type="project" value="InterPro"/>
</dbReference>
<dbReference type="GO" id="GO:0009686">
    <property type="term" value="P:gibberellin biosynthetic process"/>
    <property type="evidence" value="ECO:0000304"/>
    <property type="project" value="TAIR"/>
</dbReference>
<dbReference type="CDD" id="cd11043">
    <property type="entry name" value="CYP90-like"/>
    <property type="match status" value="1"/>
</dbReference>
<dbReference type="FunFam" id="1.10.630.10:FF:000052">
    <property type="entry name" value="Ent-kaurenoic acid oxidase"/>
    <property type="match status" value="1"/>
</dbReference>
<dbReference type="Gene3D" id="1.10.630.10">
    <property type="entry name" value="Cytochrome P450"/>
    <property type="match status" value="1"/>
</dbReference>
<dbReference type="InterPro" id="IPR001128">
    <property type="entry name" value="Cyt_P450"/>
</dbReference>
<dbReference type="InterPro" id="IPR002397">
    <property type="entry name" value="Cyt_P450_B"/>
</dbReference>
<dbReference type="InterPro" id="IPR017972">
    <property type="entry name" value="Cyt_P450_CS"/>
</dbReference>
<dbReference type="InterPro" id="IPR036396">
    <property type="entry name" value="Cyt_P450_sf"/>
</dbReference>
<dbReference type="PANTHER" id="PTHR24286">
    <property type="entry name" value="CYTOCHROME P450 26"/>
    <property type="match status" value="1"/>
</dbReference>
<dbReference type="PANTHER" id="PTHR24286:SF356">
    <property type="entry name" value="ENT-KAURENOIC ACID OXIDASE 2"/>
    <property type="match status" value="1"/>
</dbReference>
<dbReference type="Pfam" id="PF00067">
    <property type="entry name" value="p450"/>
    <property type="match status" value="1"/>
</dbReference>
<dbReference type="PRINTS" id="PR00359">
    <property type="entry name" value="BP450"/>
</dbReference>
<dbReference type="PRINTS" id="PR00385">
    <property type="entry name" value="P450"/>
</dbReference>
<dbReference type="SUPFAM" id="SSF48264">
    <property type="entry name" value="Cytochrome P450"/>
    <property type="match status" value="1"/>
</dbReference>
<dbReference type="PROSITE" id="PS00086">
    <property type="entry name" value="CYTOCHROME_P450"/>
    <property type="match status" value="1"/>
</dbReference>
<keyword id="KW-0256">Endoplasmic reticulum</keyword>
<keyword id="KW-0349">Heme</keyword>
<keyword id="KW-0408">Iron</keyword>
<keyword id="KW-0472">Membrane</keyword>
<keyword id="KW-0479">Metal-binding</keyword>
<keyword id="KW-0503">Monooxygenase</keyword>
<keyword id="KW-0560">Oxidoreductase</keyword>
<keyword id="KW-1185">Reference proteome</keyword>
<keyword id="KW-0812">Transmembrane</keyword>
<keyword id="KW-1133">Transmembrane helix</keyword>
<comment type="function">
    <text evidence="3">Catalyzes three successive oxidations of ent-kaurenoic acid giving gibberellin 12 (GA12), a key step in gibberellins (GAs) biosynthesis. GAs, which are involved many processes, including stem elongation, play a central role in plant development.</text>
</comment>
<comment type="catalytic activity">
    <reaction evidence="3">
        <text>ent-kaur-16-en-19-oate + 3 reduced [NADPH--hemoprotein reductase] + 3 O2 = gibberellin A12 + 3 oxidized [NADPH--hemoprotein reductase] + 4 H2O + 4 H(+)</text>
        <dbReference type="Rhea" id="RHEA:33219"/>
        <dbReference type="Rhea" id="RHEA-COMP:11964"/>
        <dbReference type="Rhea" id="RHEA-COMP:11965"/>
        <dbReference type="ChEBI" id="CHEBI:15377"/>
        <dbReference type="ChEBI" id="CHEBI:15378"/>
        <dbReference type="ChEBI" id="CHEBI:15379"/>
        <dbReference type="ChEBI" id="CHEBI:57297"/>
        <dbReference type="ChEBI" id="CHEBI:57618"/>
        <dbReference type="ChEBI" id="CHEBI:58210"/>
        <dbReference type="ChEBI" id="CHEBI:58627"/>
        <dbReference type="EC" id="1.14.14.107"/>
    </reaction>
    <physiologicalReaction direction="left-to-right" evidence="3">
        <dbReference type="Rhea" id="RHEA:33220"/>
    </physiologicalReaction>
</comment>
<comment type="catalytic activity">
    <reaction evidence="3">
        <text>ent-kaur-16-en-19-oate + reduced [NADPH--hemoprotein reductase] + O2 = ent-7alpha-hydroxykaur-16-en-19-oate + oxidized [NADPH--hemoprotein reductase] + H2O + H(+)</text>
        <dbReference type="Rhea" id="RHEA:19241"/>
        <dbReference type="Rhea" id="RHEA-COMP:11964"/>
        <dbReference type="Rhea" id="RHEA-COMP:11965"/>
        <dbReference type="ChEBI" id="CHEBI:15377"/>
        <dbReference type="ChEBI" id="CHEBI:15378"/>
        <dbReference type="ChEBI" id="CHEBI:15379"/>
        <dbReference type="ChEBI" id="CHEBI:57297"/>
        <dbReference type="ChEBI" id="CHEBI:57298"/>
        <dbReference type="ChEBI" id="CHEBI:57618"/>
        <dbReference type="ChEBI" id="CHEBI:58210"/>
    </reaction>
    <physiologicalReaction direction="left-to-right" evidence="3">
        <dbReference type="Rhea" id="RHEA:19242"/>
    </physiologicalReaction>
</comment>
<comment type="catalytic activity">
    <reaction evidence="3">
        <text>ent-7alpha-hydroxykaur-16-en-19-oate + reduced [NADPH--hemoprotein reductase] + O2 = gibberellin A12 aldehyde + oxidized [NADPH--hemoprotein reductase] + 2 H2O + H(+)</text>
        <dbReference type="Rhea" id="RHEA:22904"/>
        <dbReference type="Rhea" id="RHEA-COMP:11964"/>
        <dbReference type="Rhea" id="RHEA-COMP:11965"/>
        <dbReference type="ChEBI" id="CHEBI:15377"/>
        <dbReference type="ChEBI" id="CHEBI:15378"/>
        <dbReference type="ChEBI" id="CHEBI:15379"/>
        <dbReference type="ChEBI" id="CHEBI:57298"/>
        <dbReference type="ChEBI" id="CHEBI:57432"/>
        <dbReference type="ChEBI" id="CHEBI:57618"/>
        <dbReference type="ChEBI" id="CHEBI:58210"/>
    </reaction>
    <physiologicalReaction direction="left-to-right" evidence="3">
        <dbReference type="Rhea" id="RHEA:22905"/>
    </physiologicalReaction>
</comment>
<comment type="catalytic activity">
    <reaction evidence="3">
        <text>gibberellin A12 aldehyde + reduced [NADPH--hemoprotein reductase] + O2 = gibberellin A12 + oxidized [NADPH--hemoprotein reductase] + H2O + 2 H(+)</text>
        <dbReference type="Rhea" id="RHEA:22700"/>
        <dbReference type="Rhea" id="RHEA-COMP:11964"/>
        <dbReference type="Rhea" id="RHEA-COMP:11965"/>
        <dbReference type="ChEBI" id="CHEBI:15377"/>
        <dbReference type="ChEBI" id="CHEBI:15378"/>
        <dbReference type="ChEBI" id="CHEBI:15379"/>
        <dbReference type="ChEBI" id="CHEBI:57432"/>
        <dbReference type="ChEBI" id="CHEBI:57618"/>
        <dbReference type="ChEBI" id="CHEBI:58210"/>
        <dbReference type="ChEBI" id="CHEBI:58627"/>
    </reaction>
    <physiologicalReaction direction="left-to-right" evidence="3">
        <dbReference type="Rhea" id="RHEA:22701"/>
    </physiologicalReaction>
</comment>
<comment type="cofactor">
    <cofactor evidence="1">
        <name>heme</name>
        <dbReference type="ChEBI" id="CHEBI:30413"/>
    </cofactor>
</comment>
<comment type="pathway">
    <text evidence="3">Plant hormone biosynthesis; gibberellin biosynthesis.</text>
</comment>
<comment type="subcellular location">
    <subcellularLocation>
        <location evidence="4">Endoplasmic reticulum membrane</location>
        <topology evidence="4">Single-pass membrane protein</topology>
    </subcellularLocation>
</comment>
<comment type="tissue specificity">
    <text evidence="3">Widely expressed. Highly expressed in influorescence stem, influorescence, and silique tissue. Weakly expressed in cauline and rosette leaves. Expressed at a weaker level in stem and influorescence than AtKAO1/CYP88A3.</text>
</comment>
<comment type="similarity">
    <text evidence="6">Belongs to the cytochrome P450 family.</text>
</comment>